<feature type="chain" id="PRO_1000077839" description="UvrABC system protein C">
    <location>
        <begin position="1"/>
        <end position="609"/>
    </location>
</feature>
<feature type="domain" description="GIY-YIG" evidence="1">
    <location>
        <begin position="16"/>
        <end position="94"/>
    </location>
</feature>
<feature type="domain" description="UVR" evidence="1">
    <location>
        <begin position="203"/>
        <end position="238"/>
    </location>
</feature>
<dbReference type="EMBL" id="CP000851">
    <property type="protein sequence ID" value="ABV87276.1"/>
    <property type="molecule type" value="Genomic_DNA"/>
</dbReference>
<dbReference type="RefSeq" id="WP_012155194.1">
    <property type="nucleotide sequence ID" value="NC_009901.1"/>
</dbReference>
<dbReference type="SMR" id="A8H3Y9"/>
<dbReference type="STRING" id="398579.Spea_1954"/>
<dbReference type="KEGG" id="spl:Spea_1954"/>
<dbReference type="eggNOG" id="COG0322">
    <property type="taxonomic scope" value="Bacteria"/>
</dbReference>
<dbReference type="HOGENOM" id="CLU_014841_3_0_6"/>
<dbReference type="OrthoDB" id="9804933at2"/>
<dbReference type="Proteomes" id="UP000002608">
    <property type="component" value="Chromosome"/>
</dbReference>
<dbReference type="GO" id="GO:0005737">
    <property type="term" value="C:cytoplasm"/>
    <property type="evidence" value="ECO:0007669"/>
    <property type="project" value="UniProtKB-SubCell"/>
</dbReference>
<dbReference type="GO" id="GO:0009380">
    <property type="term" value="C:excinuclease repair complex"/>
    <property type="evidence" value="ECO:0007669"/>
    <property type="project" value="InterPro"/>
</dbReference>
<dbReference type="GO" id="GO:0003677">
    <property type="term" value="F:DNA binding"/>
    <property type="evidence" value="ECO:0007669"/>
    <property type="project" value="UniProtKB-UniRule"/>
</dbReference>
<dbReference type="GO" id="GO:0009381">
    <property type="term" value="F:excinuclease ABC activity"/>
    <property type="evidence" value="ECO:0007669"/>
    <property type="project" value="UniProtKB-UniRule"/>
</dbReference>
<dbReference type="GO" id="GO:0006289">
    <property type="term" value="P:nucleotide-excision repair"/>
    <property type="evidence" value="ECO:0007669"/>
    <property type="project" value="UniProtKB-UniRule"/>
</dbReference>
<dbReference type="GO" id="GO:0009432">
    <property type="term" value="P:SOS response"/>
    <property type="evidence" value="ECO:0007669"/>
    <property type="project" value="UniProtKB-UniRule"/>
</dbReference>
<dbReference type="CDD" id="cd10434">
    <property type="entry name" value="GIY-YIG_UvrC_Cho"/>
    <property type="match status" value="1"/>
</dbReference>
<dbReference type="FunFam" id="1.10.150.20:FF:000005">
    <property type="entry name" value="UvrABC system protein C"/>
    <property type="match status" value="1"/>
</dbReference>
<dbReference type="FunFam" id="3.30.420.340:FF:000001">
    <property type="entry name" value="UvrABC system protein C"/>
    <property type="match status" value="1"/>
</dbReference>
<dbReference type="FunFam" id="3.40.1440.10:FF:000001">
    <property type="entry name" value="UvrABC system protein C"/>
    <property type="match status" value="1"/>
</dbReference>
<dbReference type="Gene3D" id="1.10.150.20">
    <property type="entry name" value="5' to 3' exonuclease, C-terminal subdomain"/>
    <property type="match status" value="1"/>
</dbReference>
<dbReference type="Gene3D" id="3.40.1440.10">
    <property type="entry name" value="GIY-YIG endonuclease"/>
    <property type="match status" value="1"/>
</dbReference>
<dbReference type="Gene3D" id="4.10.860.10">
    <property type="entry name" value="UVR domain"/>
    <property type="match status" value="1"/>
</dbReference>
<dbReference type="Gene3D" id="3.30.420.340">
    <property type="entry name" value="UvrC, RNAse H endonuclease domain"/>
    <property type="match status" value="1"/>
</dbReference>
<dbReference type="HAMAP" id="MF_00203">
    <property type="entry name" value="UvrC"/>
    <property type="match status" value="1"/>
</dbReference>
<dbReference type="InterPro" id="IPR000305">
    <property type="entry name" value="GIY-YIG_endonuc"/>
</dbReference>
<dbReference type="InterPro" id="IPR035901">
    <property type="entry name" value="GIY-YIG_endonuc_sf"/>
</dbReference>
<dbReference type="InterPro" id="IPR047296">
    <property type="entry name" value="GIY-YIG_UvrC_Cho"/>
</dbReference>
<dbReference type="InterPro" id="IPR003583">
    <property type="entry name" value="Hlx-hairpin-Hlx_DNA-bd_motif"/>
</dbReference>
<dbReference type="InterPro" id="IPR010994">
    <property type="entry name" value="RuvA_2-like"/>
</dbReference>
<dbReference type="InterPro" id="IPR001943">
    <property type="entry name" value="UVR_dom"/>
</dbReference>
<dbReference type="InterPro" id="IPR036876">
    <property type="entry name" value="UVR_dom_sf"/>
</dbReference>
<dbReference type="InterPro" id="IPR050066">
    <property type="entry name" value="UvrABC_protein_C"/>
</dbReference>
<dbReference type="InterPro" id="IPR004791">
    <property type="entry name" value="UvrC"/>
</dbReference>
<dbReference type="InterPro" id="IPR001162">
    <property type="entry name" value="UvrC_RNase_H_dom"/>
</dbReference>
<dbReference type="InterPro" id="IPR038476">
    <property type="entry name" value="UvrC_RNase_H_dom_sf"/>
</dbReference>
<dbReference type="NCBIfam" id="NF001824">
    <property type="entry name" value="PRK00558.1-5"/>
    <property type="match status" value="1"/>
</dbReference>
<dbReference type="NCBIfam" id="TIGR00194">
    <property type="entry name" value="uvrC"/>
    <property type="match status" value="1"/>
</dbReference>
<dbReference type="PANTHER" id="PTHR30562:SF1">
    <property type="entry name" value="UVRABC SYSTEM PROTEIN C"/>
    <property type="match status" value="1"/>
</dbReference>
<dbReference type="PANTHER" id="PTHR30562">
    <property type="entry name" value="UVRC/OXIDOREDUCTASE"/>
    <property type="match status" value="1"/>
</dbReference>
<dbReference type="Pfam" id="PF01541">
    <property type="entry name" value="GIY-YIG"/>
    <property type="match status" value="1"/>
</dbReference>
<dbReference type="Pfam" id="PF14520">
    <property type="entry name" value="HHH_5"/>
    <property type="match status" value="1"/>
</dbReference>
<dbReference type="Pfam" id="PF02151">
    <property type="entry name" value="UVR"/>
    <property type="match status" value="1"/>
</dbReference>
<dbReference type="Pfam" id="PF22920">
    <property type="entry name" value="UvrC_RNaseH"/>
    <property type="match status" value="1"/>
</dbReference>
<dbReference type="Pfam" id="PF08459">
    <property type="entry name" value="UvrC_RNaseH_dom"/>
    <property type="match status" value="1"/>
</dbReference>
<dbReference type="SMART" id="SM00465">
    <property type="entry name" value="GIYc"/>
    <property type="match status" value="1"/>
</dbReference>
<dbReference type="SMART" id="SM00278">
    <property type="entry name" value="HhH1"/>
    <property type="match status" value="2"/>
</dbReference>
<dbReference type="SUPFAM" id="SSF46600">
    <property type="entry name" value="C-terminal UvrC-binding domain of UvrB"/>
    <property type="match status" value="1"/>
</dbReference>
<dbReference type="SUPFAM" id="SSF82771">
    <property type="entry name" value="GIY-YIG endonuclease"/>
    <property type="match status" value="1"/>
</dbReference>
<dbReference type="SUPFAM" id="SSF47781">
    <property type="entry name" value="RuvA domain 2-like"/>
    <property type="match status" value="1"/>
</dbReference>
<dbReference type="PROSITE" id="PS50164">
    <property type="entry name" value="GIY_YIG"/>
    <property type="match status" value="1"/>
</dbReference>
<dbReference type="PROSITE" id="PS50151">
    <property type="entry name" value="UVR"/>
    <property type="match status" value="1"/>
</dbReference>
<dbReference type="PROSITE" id="PS50165">
    <property type="entry name" value="UVRC"/>
    <property type="match status" value="1"/>
</dbReference>
<keyword id="KW-0963">Cytoplasm</keyword>
<keyword id="KW-0227">DNA damage</keyword>
<keyword id="KW-0228">DNA excision</keyword>
<keyword id="KW-0234">DNA repair</keyword>
<keyword id="KW-0267">Excision nuclease</keyword>
<keyword id="KW-1185">Reference proteome</keyword>
<keyword id="KW-0742">SOS response</keyword>
<name>UVRC_SHEPA</name>
<accession>A8H3Y9</accession>
<proteinExistence type="inferred from homology"/>
<evidence type="ECO:0000255" key="1">
    <source>
        <dbReference type="HAMAP-Rule" id="MF_00203"/>
    </source>
</evidence>
<organism>
    <name type="scientific">Shewanella pealeana (strain ATCC 700345 / ANG-SQ1)</name>
    <dbReference type="NCBI Taxonomy" id="398579"/>
    <lineage>
        <taxon>Bacteria</taxon>
        <taxon>Pseudomonadati</taxon>
        <taxon>Pseudomonadota</taxon>
        <taxon>Gammaproteobacteria</taxon>
        <taxon>Alteromonadales</taxon>
        <taxon>Shewanellaceae</taxon>
        <taxon>Shewanella</taxon>
    </lineage>
</organism>
<reference key="1">
    <citation type="submission" date="2007-10" db="EMBL/GenBank/DDBJ databases">
        <title>Complete sequence of Shewanella pealeana ATCC 700345.</title>
        <authorList>
            <consortium name="US DOE Joint Genome Institute"/>
            <person name="Copeland A."/>
            <person name="Lucas S."/>
            <person name="Lapidus A."/>
            <person name="Barry K."/>
            <person name="Glavina del Rio T."/>
            <person name="Dalin E."/>
            <person name="Tice H."/>
            <person name="Pitluck S."/>
            <person name="Chertkov O."/>
            <person name="Brettin T."/>
            <person name="Bruce D."/>
            <person name="Detter J.C."/>
            <person name="Han C."/>
            <person name="Schmutz J."/>
            <person name="Larimer F."/>
            <person name="Land M."/>
            <person name="Hauser L."/>
            <person name="Kyrpides N."/>
            <person name="Kim E."/>
            <person name="Zhao J.-S.Z."/>
            <person name="Manno D."/>
            <person name="Hawari J."/>
            <person name="Richardson P."/>
        </authorList>
    </citation>
    <scope>NUCLEOTIDE SEQUENCE [LARGE SCALE GENOMIC DNA]</scope>
    <source>
        <strain>ATCC 700345 / ANG-SQ1</strain>
    </source>
</reference>
<sequence length="609" mass="68701">MSDEFNANQFLKTVTSSPGVYRMYDAKDAVIYVGKAKDLKKRLSSYFRKNLANVKTQALVSHIANIDVTVTHSETDALILENDYIKQYMPKYNVLLRDDKSYPYILLSNHQHPRLAYHRGPKRDKGQYFGPYPNGGAVRESLHLMQKIFPIRQCDDLYYKSRSRPCLQYQIGRCSAPCVDLVSEEDYQEQVRLATLFLKGKNQQVMSVLVQKMEQASSDMRYEQAALYRDQITALRRVSEQQEVSNASGDMDVIGAYYASGVACFHLLFIREGKIFGSRSYYPKVPVNTEVSEVLRSFMLQFYLNSDSQRLTPKEILISDAFEEQAELADAIQSAQNKKVEIKTQVRGERASFLRLALTNATNAVNTRLSHKNTIEQRFLLLEEAIESTNKIQRMECFDISHTMGESTVASCVVFNREGPSKADYRRYNITGITPGDDYAAMKQAITRRFDKITEKGKIPDILFIDGGIGQLRIAQKVVDEQFVALDNAPTLIGVAKGEGRKPGLETLIYGESEESFSLPADSGALHLIQHIRDESHRFAITGHRNKRQKTRNTSTLETIAGVGPKRRKALLQYLGGLQEVKGASVSELAKVPGISLEMAQTIHDALRG</sequence>
<comment type="function">
    <text evidence="1">The UvrABC repair system catalyzes the recognition and processing of DNA lesions. UvrC both incises the 5' and 3' sides of the lesion. The N-terminal half is responsible for the 3' incision and the C-terminal half is responsible for the 5' incision.</text>
</comment>
<comment type="subunit">
    <text evidence="1">Interacts with UvrB in an incision complex.</text>
</comment>
<comment type="subcellular location">
    <subcellularLocation>
        <location evidence="1">Cytoplasm</location>
    </subcellularLocation>
</comment>
<comment type="similarity">
    <text evidence="1">Belongs to the UvrC family.</text>
</comment>
<gene>
    <name evidence="1" type="primary">uvrC</name>
    <name type="ordered locus">Spea_1954</name>
</gene>
<protein>
    <recommendedName>
        <fullName evidence="1">UvrABC system protein C</fullName>
        <shortName evidence="1">Protein UvrC</shortName>
    </recommendedName>
    <alternativeName>
        <fullName evidence="1">Excinuclease ABC subunit C</fullName>
    </alternativeName>
</protein>